<proteinExistence type="evidence at protein level"/>
<comment type="function">
    <text evidence="1 2">Antimicrobial peptide with activity against Gram-negative bacterium E.coli ATCC 25922 (MIC=25 uM), Gram-positive bacterium S.epidermidis ATCC 12228 (MIC=6.25 uM) and against fungus C.albicans ATCC 24433 (MIC=50 uM) (PubMed:29980138). Has an anti-inflammatory effect, since it inhibits the production of the pro-inflammatory cytokine TNF-alpha (PubMed:30734396). Has an activity of stimulation of insulin release, which may protect the species from being eaten by predators by causing fatal hypoglycemia (PubMed:30734396). Is cytotoxic to cancer line cells (PubMed:30734396). Shows moderate hemolysis on mouse erythrocytes (LC(50)=28 uM) (PubMed:30734396).</text>
</comment>
<comment type="subcellular location">
    <subcellularLocation>
        <location evidence="1">Secreted</location>
    </subcellularLocation>
</comment>
<comment type="tissue specificity">
    <text evidence="5">Expressed by the skin glands.</text>
</comment>
<comment type="mass spectrometry"/>
<comment type="similarity">
    <text evidence="4">Belongs to the frog skin active peptide (FSAP) family. Phylloseptin subfamily.</text>
</comment>
<comment type="online information" name="The antimicrobial peptide database">
    <link uri="https://wangapd3.com/database/query_output.php?ID=02989"/>
</comment>
<feature type="peptide" id="PRO_0000445202" description="Phylloseptin-1.1TR" evidence="1">
    <location>
        <begin position="1"/>
        <end position="19"/>
    </location>
</feature>
<feature type="modified residue" description="Leucine amide" evidence="1">
    <location>
        <position position="19"/>
    </location>
</feature>
<dbReference type="GO" id="GO:0005576">
    <property type="term" value="C:extracellular region"/>
    <property type="evidence" value="ECO:0007669"/>
    <property type="project" value="UniProtKB-SubCell"/>
</dbReference>
<dbReference type="GO" id="GO:0042742">
    <property type="term" value="P:defense response to bacterium"/>
    <property type="evidence" value="ECO:0007669"/>
    <property type="project" value="UniProtKB-KW"/>
</dbReference>
<dbReference type="GO" id="GO:0050832">
    <property type="term" value="P:defense response to fungus"/>
    <property type="evidence" value="ECO:0007669"/>
    <property type="project" value="UniProtKB-KW"/>
</dbReference>
<dbReference type="GO" id="GO:0045087">
    <property type="term" value="P:innate immune response"/>
    <property type="evidence" value="ECO:0007669"/>
    <property type="project" value="UniProtKB-KW"/>
</dbReference>
<dbReference type="GO" id="GO:0031640">
    <property type="term" value="P:killing of cells of another organism"/>
    <property type="evidence" value="ECO:0007669"/>
    <property type="project" value="UniProtKB-KW"/>
</dbReference>
<sequence>FLSLIPKIAGGIASLVKNL</sequence>
<evidence type="ECO:0000269" key="1">
    <source>
    </source>
</evidence>
<evidence type="ECO:0000269" key="2">
    <source>
    </source>
</evidence>
<evidence type="ECO:0000303" key="3">
    <source>
    </source>
</evidence>
<evidence type="ECO:0000305" key="4"/>
<evidence type="ECO:0000305" key="5">
    <source>
    </source>
</evidence>
<protein>
    <recommendedName>
        <fullName evidence="3">Phylloseptin-1.1TR</fullName>
        <shortName evidence="4">PLS-1.1TR</shortName>
    </recommendedName>
</protein>
<organism>
    <name type="scientific">Phyllomedusa trinitatis</name>
    <name type="common">Trinidad leaf frog</name>
    <dbReference type="NCBI Taxonomy" id="332092"/>
    <lineage>
        <taxon>Eukaryota</taxon>
        <taxon>Metazoa</taxon>
        <taxon>Chordata</taxon>
        <taxon>Craniata</taxon>
        <taxon>Vertebrata</taxon>
        <taxon>Euteleostomi</taxon>
        <taxon>Amphibia</taxon>
        <taxon>Batrachia</taxon>
        <taxon>Anura</taxon>
        <taxon>Neobatrachia</taxon>
        <taxon>Hyloidea</taxon>
        <taxon>Hylidae</taxon>
        <taxon>Phyllomedusinae</taxon>
        <taxon>Phyllomedusa</taxon>
    </lineage>
</organism>
<keyword id="KW-0027">Amidation</keyword>
<keyword id="KW-0878">Amphibian defense peptide</keyword>
<keyword id="KW-0044">Antibiotic</keyword>
<keyword id="KW-0929">Antimicrobial</keyword>
<keyword id="KW-0204">Cytolysis</keyword>
<keyword id="KW-0903">Direct protein sequencing</keyword>
<keyword id="KW-0295">Fungicide</keyword>
<keyword id="KW-0354">Hemolysis</keyword>
<keyword id="KW-0391">Immunity</keyword>
<keyword id="KW-0399">Innate immunity</keyword>
<keyword id="KW-0964">Secreted</keyword>
<accession>C0HLD5</accession>
<reference key="1">
    <citation type="journal article" date="2018" name="Comp. Biochem. Physiol.">
        <title>Peptidomic analysis of the host-defense peptides in skin secretions of the Trinidadian leaf frog Phyllomedusa trinitatis (Phyllomedusidae).</title>
        <authorList>
            <person name="Mechkarska M."/>
            <person name="Coquet L."/>
            <person name="Leprince J."/>
            <person name="Auguste R.J."/>
            <person name="Jouenne T."/>
            <person name="Mangoni M.L."/>
            <person name="Conlon J.M."/>
        </authorList>
    </citation>
    <scope>PROTEIN SEQUENCE</scope>
    <scope>FUNCTION</scope>
    <scope>SYNTHESIS</scope>
    <scope>SUBCELLULAR LOCATION</scope>
    <scope>MASS SPECTROMETRY</scope>
    <scope>AMIDATION AT LEU-19</scope>
    <source>
        <tissue>Skin secretion</tissue>
    </source>
</reference>
<reference key="2">
    <citation type="journal article" date="2019" name="J. Pept. Sci.">
        <title>Immunomodulatory, insulinotropic, and cytotoxic activities of phylloseptins and plasticin-TR from the Trinidanian leaf frog Phyllomedusa trinitatis.</title>
        <authorList>
            <person name="Pantic J."/>
            <person name="Guilhaudis L."/>
            <person name="Musale V."/>
            <person name="Attoub S."/>
            <person name="Lukic M.L."/>
            <person name="Mechkarska M."/>
            <person name="Conlon J.M."/>
        </authorList>
    </citation>
    <scope>FUNCTION</scope>
    <scope>SYNTHESIS</scope>
</reference>
<name>PLS11_PHYTB</name>